<sequence>MAKKKIIFTGGGTVGHVTLNLLLIPRFLKDGWEVHYIGDKHGIEHEQIEQSDFDVIFHSIATGKLRRYFSLKNVLDVFKVGWGVLQSLTIMVKVRPQVLFSKGGFVSVPPVVAANLLRIPVFVHESDLSMGLANRIAYKFATTMYTTFEQSDNLTKTKHVGAITKVNQTISSSDDNTEIKTIKEYFDPRLKTLLFIGGSAGAKVFNQFISDTPELTKHYNVINISGDKTLNNLSQNLYRVDYVTEMYQPLMDLADVVITRGGSNTIFELLAMAKLHIIVPLGKEASRGDQLENAAYFEEKGYAQQLSEENLNFAELDKVIKDLLENQTVYQDKMTSSSEIKTPNDFYNLLLTDITSKSKGK</sequence>
<gene>
    <name evidence="1" type="primary">murG</name>
    <name type="ordered locus">SMU_549</name>
</gene>
<name>MURG_STRMU</name>
<keyword id="KW-0131">Cell cycle</keyword>
<keyword id="KW-0132">Cell division</keyword>
<keyword id="KW-1003">Cell membrane</keyword>
<keyword id="KW-0133">Cell shape</keyword>
<keyword id="KW-0961">Cell wall biogenesis/degradation</keyword>
<keyword id="KW-0328">Glycosyltransferase</keyword>
<keyword id="KW-0472">Membrane</keyword>
<keyword id="KW-0573">Peptidoglycan synthesis</keyword>
<keyword id="KW-1185">Reference proteome</keyword>
<keyword id="KW-0808">Transferase</keyword>
<dbReference type="EC" id="2.4.1.227" evidence="1"/>
<dbReference type="EMBL" id="AE014133">
    <property type="protein sequence ID" value="AAN58291.1"/>
    <property type="molecule type" value="Genomic_DNA"/>
</dbReference>
<dbReference type="RefSeq" id="NP_720985.1">
    <property type="nucleotide sequence ID" value="NC_004350.2"/>
</dbReference>
<dbReference type="RefSeq" id="WP_002262066.1">
    <property type="nucleotide sequence ID" value="NC_004350.2"/>
</dbReference>
<dbReference type="SMR" id="Q8DVE2"/>
<dbReference type="STRING" id="210007.SMU_549"/>
<dbReference type="CAZy" id="GT28">
    <property type="family name" value="Glycosyltransferase Family 28"/>
</dbReference>
<dbReference type="KEGG" id="smu:SMU_549"/>
<dbReference type="PATRIC" id="fig|210007.7.peg.484"/>
<dbReference type="eggNOG" id="COG0707">
    <property type="taxonomic scope" value="Bacteria"/>
</dbReference>
<dbReference type="HOGENOM" id="CLU_037404_0_0_9"/>
<dbReference type="OrthoDB" id="9808936at2"/>
<dbReference type="PhylomeDB" id="Q8DVE2"/>
<dbReference type="UniPathway" id="UPA00219"/>
<dbReference type="Proteomes" id="UP000002512">
    <property type="component" value="Chromosome"/>
</dbReference>
<dbReference type="GO" id="GO:0005886">
    <property type="term" value="C:plasma membrane"/>
    <property type="evidence" value="ECO:0007669"/>
    <property type="project" value="UniProtKB-SubCell"/>
</dbReference>
<dbReference type="GO" id="GO:0050511">
    <property type="term" value="F:undecaprenyldiphospho-muramoylpentapeptide beta-N-acetylglucosaminyltransferase activity"/>
    <property type="evidence" value="ECO:0007669"/>
    <property type="project" value="UniProtKB-UniRule"/>
</dbReference>
<dbReference type="GO" id="GO:0005975">
    <property type="term" value="P:carbohydrate metabolic process"/>
    <property type="evidence" value="ECO:0007669"/>
    <property type="project" value="InterPro"/>
</dbReference>
<dbReference type="GO" id="GO:0051301">
    <property type="term" value="P:cell division"/>
    <property type="evidence" value="ECO:0007669"/>
    <property type="project" value="UniProtKB-KW"/>
</dbReference>
<dbReference type="GO" id="GO:0071555">
    <property type="term" value="P:cell wall organization"/>
    <property type="evidence" value="ECO:0007669"/>
    <property type="project" value="UniProtKB-KW"/>
</dbReference>
<dbReference type="GO" id="GO:0030259">
    <property type="term" value="P:lipid glycosylation"/>
    <property type="evidence" value="ECO:0007669"/>
    <property type="project" value="UniProtKB-UniRule"/>
</dbReference>
<dbReference type="GO" id="GO:0009252">
    <property type="term" value="P:peptidoglycan biosynthetic process"/>
    <property type="evidence" value="ECO:0007669"/>
    <property type="project" value="UniProtKB-UniRule"/>
</dbReference>
<dbReference type="GO" id="GO:0008360">
    <property type="term" value="P:regulation of cell shape"/>
    <property type="evidence" value="ECO:0007669"/>
    <property type="project" value="UniProtKB-KW"/>
</dbReference>
<dbReference type="CDD" id="cd03785">
    <property type="entry name" value="GT28_MurG"/>
    <property type="match status" value="1"/>
</dbReference>
<dbReference type="Gene3D" id="3.40.50.2000">
    <property type="entry name" value="Glycogen Phosphorylase B"/>
    <property type="match status" value="2"/>
</dbReference>
<dbReference type="HAMAP" id="MF_00033">
    <property type="entry name" value="MurG"/>
    <property type="match status" value="1"/>
</dbReference>
<dbReference type="InterPro" id="IPR006009">
    <property type="entry name" value="GlcNAc_MurG"/>
</dbReference>
<dbReference type="InterPro" id="IPR007235">
    <property type="entry name" value="Glyco_trans_28_C"/>
</dbReference>
<dbReference type="InterPro" id="IPR004276">
    <property type="entry name" value="GlycoTrans_28_N"/>
</dbReference>
<dbReference type="PANTHER" id="PTHR21015:SF27">
    <property type="entry name" value="UDP-N-ACETYLGLUCOSAMINE--N-ACETYLMURAMYL-(PENTAPEPTIDE) PYROPHOSPHORYL-UNDECAPRENOL N-ACETYLGLUCOSAMINE TRANSFERASE"/>
    <property type="match status" value="1"/>
</dbReference>
<dbReference type="PANTHER" id="PTHR21015">
    <property type="entry name" value="UDP-N-ACETYLGLUCOSAMINE--N-ACETYLMURAMYL-(PENTAPEPTIDE) PYROPHOSPHORYL-UNDECAPRENOL N-ACETYLGLUCOSAMINE TRANSFERASE 1"/>
    <property type="match status" value="1"/>
</dbReference>
<dbReference type="Pfam" id="PF04101">
    <property type="entry name" value="Glyco_tran_28_C"/>
    <property type="match status" value="1"/>
</dbReference>
<dbReference type="Pfam" id="PF03033">
    <property type="entry name" value="Glyco_transf_28"/>
    <property type="match status" value="1"/>
</dbReference>
<dbReference type="SUPFAM" id="SSF53756">
    <property type="entry name" value="UDP-Glycosyltransferase/glycogen phosphorylase"/>
    <property type="match status" value="1"/>
</dbReference>
<evidence type="ECO:0000255" key="1">
    <source>
        <dbReference type="HAMAP-Rule" id="MF_00033"/>
    </source>
</evidence>
<comment type="function">
    <text evidence="1">Cell wall formation. Catalyzes the transfer of a GlcNAc subunit on undecaprenyl-pyrophosphoryl-MurNAc-pentapeptide (lipid intermediate I) to form undecaprenyl-pyrophosphoryl-MurNAc-(pentapeptide)GlcNAc (lipid intermediate II).</text>
</comment>
<comment type="catalytic activity">
    <reaction evidence="1">
        <text>Mur2Ac(oyl-L-Ala-gamma-D-Glu-L-Lys-D-Ala-D-Ala)-di-trans,octa-cis-undecaprenyl diphosphate + UDP-N-acetyl-alpha-D-glucosamine = beta-D-GlcNAc-(1-&gt;4)-Mur2Ac(oyl-L-Ala-gamma-D-Glu-L-Lys-D-Ala-D-Ala)-di-trans,octa-cis-undecaprenyl diphosphate + UDP + H(+)</text>
        <dbReference type="Rhea" id="RHEA:23192"/>
        <dbReference type="ChEBI" id="CHEBI:15378"/>
        <dbReference type="ChEBI" id="CHEBI:57705"/>
        <dbReference type="ChEBI" id="CHEBI:58223"/>
        <dbReference type="ChEBI" id="CHEBI:60032"/>
        <dbReference type="ChEBI" id="CHEBI:60033"/>
        <dbReference type="EC" id="2.4.1.227"/>
    </reaction>
</comment>
<comment type="pathway">
    <text evidence="1">Cell wall biogenesis; peptidoglycan biosynthesis.</text>
</comment>
<comment type="subcellular location">
    <subcellularLocation>
        <location evidence="1">Cell membrane</location>
        <topology evidence="1">Peripheral membrane protein</topology>
        <orientation evidence="1">Cytoplasmic side</orientation>
    </subcellularLocation>
</comment>
<comment type="similarity">
    <text evidence="1">Belongs to the glycosyltransferase 28 family. MurG subfamily.</text>
</comment>
<proteinExistence type="inferred from homology"/>
<reference key="1">
    <citation type="journal article" date="2002" name="Proc. Natl. Acad. Sci. U.S.A.">
        <title>Genome sequence of Streptococcus mutans UA159, a cariogenic dental pathogen.</title>
        <authorList>
            <person name="Ajdic D.J."/>
            <person name="McShan W.M."/>
            <person name="McLaughlin R.E."/>
            <person name="Savic G."/>
            <person name="Chang J."/>
            <person name="Carson M.B."/>
            <person name="Primeaux C."/>
            <person name="Tian R."/>
            <person name="Kenton S."/>
            <person name="Jia H.G."/>
            <person name="Lin S.P."/>
            <person name="Qian Y."/>
            <person name="Li S."/>
            <person name="Zhu H."/>
            <person name="Najar F.Z."/>
            <person name="Lai H."/>
            <person name="White J."/>
            <person name="Roe B.A."/>
            <person name="Ferretti J.J."/>
        </authorList>
    </citation>
    <scope>NUCLEOTIDE SEQUENCE [LARGE SCALE GENOMIC DNA]</scope>
    <source>
        <strain>ATCC 700610 / UA159</strain>
    </source>
</reference>
<protein>
    <recommendedName>
        <fullName evidence="1">UDP-N-acetylglucosamine--N-acetylmuramyl-(pentapeptide) pyrophosphoryl-undecaprenol N-acetylglucosamine transferase</fullName>
        <ecNumber evidence="1">2.4.1.227</ecNumber>
    </recommendedName>
    <alternativeName>
        <fullName evidence="1">Undecaprenyl-PP-MurNAc-pentapeptide-UDPGlcNAc GlcNAc transferase</fullName>
    </alternativeName>
</protein>
<feature type="chain" id="PRO_0000109222" description="UDP-N-acetylglucosamine--N-acetylmuramyl-(pentapeptide) pyrophosphoryl-undecaprenol N-acetylglucosamine transferase">
    <location>
        <begin position="1"/>
        <end position="361"/>
    </location>
</feature>
<feature type="binding site" evidence="1">
    <location>
        <position position="199"/>
    </location>
    <ligand>
        <name>UDP-N-acetyl-alpha-D-glucosamine</name>
        <dbReference type="ChEBI" id="CHEBI:57705"/>
    </ligand>
</feature>
<feature type="binding site" evidence="1">
    <location>
        <position position="290"/>
    </location>
    <ligand>
        <name>UDP-N-acetyl-alpha-D-glucosamine</name>
        <dbReference type="ChEBI" id="CHEBI:57705"/>
    </ligand>
</feature>
<organism>
    <name type="scientific">Streptococcus mutans serotype c (strain ATCC 700610 / UA159)</name>
    <dbReference type="NCBI Taxonomy" id="210007"/>
    <lineage>
        <taxon>Bacteria</taxon>
        <taxon>Bacillati</taxon>
        <taxon>Bacillota</taxon>
        <taxon>Bacilli</taxon>
        <taxon>Lactobacillales</taxon>
        <taxon>Streptococcaceae</taxon>
        <taxon>Streptococcus</taxon>
    </lineage>
</organism>
<accession>Q8DVE2</accession>